<sequence length="243" mass="25772">MEAKDRLIVALDVDTRDEAISIVNAVGEHCGLFKVGMQLHNSAGFAVTEEILSMGFPVFLDLKFHDIPNTVGKAATVVSRRGVKMFTVHAAGGREMLRQAVKGAREGQGERRSGGPLVLAITVLTSVSQAVLHDEVGLPGSVEENVVRFARLAQAAGVQGVVASPQEIRPIRAACGDDFVIVTPGVRPLWAGTDDQARIMTPAKAMEAGATYLVVGRPITAAPSRAEAAKRIVEEMAEGLARR</sequence>
<evidence type="ECO:0000255" key="1">
    <source>
        <dbReference type="HAMAP-Rule" id="MF_01200"/>
    </source>
</evidence>
<comment type="function">
    <text evidence="1">Catalyzes the decarboxylation of orotidine 5'-monophosphate (OMP) to uridine 5'-monophosphate (UMP).</text>
</comment>
<comment type="catalytic activity">
    <reaction evidence="1">
        <text>orotidine 5'-phosphate + H(+) = UMP + CO2</text>
        <dbReference type="Rhea" id="RHEA:11596"/>
        <dbReference type="ChEBI" id="CHEBI:15378"/>
        <dbReference type="ChEBI" id="CHEBI:16526"/>
        <dbReference type="ChEBI" id="CHEBI:57538"/>
        <dbReference type="ChEBI" id="CHEBI:57865"/>
        <dbReference type="EC" id="4.1.1.23"/>
    </reaction>
</comment>
<comment type="pathway">
    <text evidence="1">Pyrimidine metabolism; UMP biosynthesis via de novo pathway; UMP from orotate: step 2/2.</text>
</comment>
<comment type="subunit">
    <text evidence="1">Homodimer.</text>
</comment>
<comment type="similarity">
    <text evidence="1">Belongs to the OMP decarboxylase family. Type 1 subfamily.</text>
</comment>
<dbReference type="EC" id="4.1.1.23" evidence="1"/>
<dbReference type="EMBL" id="CP000930">
    <property type="protein sequence ID" value="ABZ82860.1"/>
    <property type="molecule type" value="Genomic_DNA"/>
</dbReference>
<dbReference type="RefSeq" id="WP_012281692.1">
    <property type="nucleotide sequence ID" value="NC_010337.2"/>
</dbReference>
<dbReference type="SMR" id="B0TDZ7"/>
<dbReference type="STRING" id="498761.HM1_0241"/>
<dbReference type="KEGG" id="hmo:HM1_0241"/>
<dbReference type="eggNOG" id="COG0284">
    <property type="taxonomic scope" value="Bacteria"/>
</dbReference>
<dbReference type="HOGENOM" id="CLU_067069_1_0_9"/>
<dbReference type="OrthoDB" id="9806203at2"/>
<dbReference type="UniPathway" id="UPA00070">
    <property type="reaction ID" value="UER00120"/>
</dbReference>
<dbReference type="Proteomes" id="UP000008550">
    <property type="component" value="Chromosome"/>
</dbReference>
<dbReference type="GO" id="GO:0005829">
    <property type="term" value="C:cytosol"/>
    <property type="evidence" value="ECO:0007669"/>
    <property type="project" value="TreeGrafter"/>
</dbReference>
<dbReference type="GO" id="GO:0004590">
    <property type="term" value="F:orotidine-5'-phosphate decarboxylase activity"/>
    <property type="evidence" value="ECO:0007669"/>
    <property type="project" value="UniProtKB-UniRule"/>
</dbReference>
<dbReference type="GO" id="GO:0006207">
    <property type="term" value="P:'de novo' pyrimidine nucleobase biosynthetic process"/>
    <property type="evidence" value="ECO:0007669"/>
    <property type="project" value="InterPro"/>
</dbReference>
<dbReference type="GO" id="GO:0044205">
    <property type="term" value="P:'de novo' UMP biosynthetic process"/>
    <property type="evidence" value="ECO:0007669"/>
    <property type="project" value="UniProtKB-UniRule"/>
</dbReference>
<dbReference type="CDD" id="cd04725">
    <property type="entry name" value="OMP_decarboxylase_like"/>
    <property type="match status" value="1"/>
</dbReference>
<dbReference type="FunFam" id="3.20.20.70:FF:000015">
    <property type="entry name" value="Orotidine 5'-phosphate decarboxylase"/>
    <property type="match status" value="1"/>
</dbReference>
<dbReference type="Gene3D" id="3.20.20.70">
    <property type="entry name" value="Aldolase class I"/>
    <property type="match status" value="1"/>
</dbReference>
<dbReference type="HAMAP" id="MF_01200_B">
    <property type="entry name" value="OMPdecase_type1_B"/>
    <property type="match status" value="1"/>
</dbReference>
<dbReference type="InterPro" id="IPR013785">
    <property type="entry name" value="Aldolase_TIM"/>
</dbReference>
<dbReference type="InterPro" id="IPR014732">
    <property type="entry name" value="OMPdecase"/>
</dbReference>
<dbReference type="InterPro" id="IPR018089">
    <property type="entry name" value="OMPdecase_AS"/>
</dbReference>
<dbReference type="InterPro" id="IPR047596">
    <property type="entry name" value="OMPdecase_bac"/>
</dbReference>
<dbReference type="InterPro" id="IPR001754">
    <property type="entry name" value="OMPdeCOase_dom"/>
</dbReference>
<dbReference type="InterPro" id="IPR011060">
    <property type="entry name" value="RibuloseP-bd_barrel"/>
</dbReference>
<dbReference type="NCBIfam" id="NF001273">
    <property type="entry name" value="PRK00230.1"/>
    <property type="match status" value="1"/>
</dbReference>
<dbReference type="NCBIfam" id="TIGR01740">
    <property type="entry name" value="pyrF"/>
    <property type="match status" value="1"/>
</dbReference>
<dbReference type="PANTHER" id="PTHR32119">
    <property type="entry name" value="OROTIDINE 5'-PHOSPHATE DECARBOXYLASE"/>
    <property type="match status" value="1"/>
</dbReference>
<dbReference type="PANTHER" id="PTHR32119:SF2">
    <property type="entry name" value="OROTIDINE 5'-PHOSPHATE DECARBOXYLASE"/>
    <property type="match status" value="1"/>
</dbReference>
<dbReference type="Pfam" id="PF00215">
    <property type="entry name" value="OMPdecase"/>
    <property type="match status" value="1"/>
</dbReference>
<dbReference type="SMART" id="SM00934">
    <property type="entry name" value="OMPdecase"/>
    <property type="match status" value="1"/>
</dbReference>
<dbReference type="SUPFAM" id="SSF51366">
    <property type="entry name" value="Ribulose-phoshate binding barrel"/>
    <property type="match status" value="1"/>
</dbReference>
<dbReference type="PROSITE" id="PS00156">
    <property type="entry name" value="OMPDECASE"/>
    <property type="match status" value="1"/>
</dbReference>
<reference key="1">
    <citation type="journal article" date="2008" name="J. Bacteriol.">
        <title>The genome of Heliobacterium modesticaldum, a phototrophic representative of the Firmicutes containing the simplest photosynthetic apparatus.</title>
        <authorList>
            <person name="Sattley W.M."/>
            <person name="Madigan M.T."/>
            <person name="Swingley W.D."/>
            <person name="Cheung P.C."/>
            <person name="Clocksin K.M."/>
            <person name="Conrad A.L."/>
            <person name="Dejesa L.C."/>
            <person name="Honchak B.M."/>
            <person name="Jung D.O."/>
            <person name="Karbach L.E."/>
            <person name="Kurdoglu A."/>
            <person name="Lahiri S."/>
            <person name="Mastrian S.D."/>
            <person name="Page L.E."/>
            <person name="Taylor H.L."/>
            <person name="Wang Z.T."/>
            <person name="Raymond J."/>
            <person name="Chen M."/>
            <person name="Blankenship R.E."/>
            <person name="Touchman J.W."/>
        </authorList>
    </citation>
    <scope>NUCLEOTIDE SEQUENCE [LARGE SCALE GENOMIC DNA]</scope>
    <source>
        <strain>ATCC 51547 / Ice1</strain>
    </source>
</reference>
<proteinExistence type="inferred from homology"/>
<name>PYRF_HELMI</name>
<protein>
    <recommendedName>
        <fullName evidence="1">Orotidine 5'-phosphate decarboxylase</fullName>
        <ecNumber evidence="1">4.1.1.23</ecNumber>
    </recommendedName>
    <alternativeName>
        <fullName evidence="1">OMP decarboxylase</fullName>
        <shortName evidence="1">OMPDCase</shortName>
        <shortName evidence="1">OMPdecase</shortName>
    </alternativeName>
</protein>
<keyword id="KW-0210">Decarboxylase</keyword>
<keyword id="KW-0456">Lyase</keyword>
<keyword id="KW-0665">Pyrimidine biosynthesis</keyword>
<keyword id="KW-1185">Reference proteome</keyword>
<gene>
    <name evidence="1" type="primary">pyrF</name>
    <name type="ordered locus">Helmi_05240</name>
    <name type="ORF">HM1_0241</name>
</gene>
<accession>B0TDZ7</accession>
<organism>
    <name type="scientific">Heliobacterium modesticaldum (strain ATCC 51547 / Ice1)</name>
    <dbReference type="NCBI Taxonomy" id="498761"/>
    <lineage>
        <taxon>Bacteria</taxon>
        <taxon>Bacillati</taxon>
        <taxon>Bacillota</taxon>
        <taxon>Clostridia</taxon>
        <taxon>Eubacteriales</taxon>
        <taxon>Heliobacteriaceae</taxon>
        <taxon>Heliomicrobium</taxon>
    </lineage>
</organism>
<feature type="chain" id="PRO_1000138532" description="Orotidine 5'-phosphate decarboxylase">
    <location>
        <begin position="1"/>
        <end position="243"/>
    </location>
</feature>
<feature type="active site" description="Proton donor" evidence="1">
    <location>
        <position position="63"/>
    </location>
</feature>
<feature type="binding site" evidence="1">
    <location>
        <position position="12"/>
    </location>
    <ligand>
        <name>substrate</name>
    </ligand>
</feature>
<feature type="binding site" evidence="1">
    <location>
        <position position="34"/>
    </location>
    <ligand>
        <name>substrate</name>
    </ligand>
</feature>
<feature type="binding site" evidence="1">
    <location>
        <begin position="61"/>
        <end position="70"/>
    </location>
    <ligand>
        <name>substrate</name>
    </ligand>
</feature>
<feature type="binding site" evidence="1">
    <location>
        <position position="125"/>
    </location>
    <ligand>
        <name>substrate</name>
    </ligand>
</feature>
<feature type="binding site" evidence="1">
    <location>
        <position position="187"/>
    </location>
    <ligand>
        <name>substrate</name>
    </ligand>
</feature>
<feature type="binding site" evidence="1">
    <location>
        <position position="196"/>
    </location>
    <ligand>
        <name>substrate</name>
    </ligand>
</feature>
<feature type="binding site" evidence="1">
    <location>
        <position position="216"/>
    </location>
    <ligand>
        <name>substrate</name>
    </ligand>
</feature>
<feature type="binding site" evidence="1">
    <location>
        <position position="217"/>
    </location>
    <ligand>
        <name>substrate</name>
    </ligand>
</feature>